<keyword id="KW-0238">DNA-binding</keyword>
<keyword id="KW-0614">Plasmid</keyword>
<proteinExistence type="inferred from homology"/>
<name>SSB1_PSEPU</name>
<feature type="chain" id="PRO_0000096080" description="Single-stranded DNA-binding protein">
    <location>
        <begin position="1"/>
        <end position="161"/>
    </location>
</feature>
<feature type="domain" description="SSB" evidence="1">
    <location>
        <begin position="5"/>
        <end position="109"/>
    </location>
</feature>
<feature type="region of interest" description="Disordered" evidence="2">
    <location>
        <begin position="110"/>
        <end position="150"/>
    </location>
</feature>
<feature type="compositionally biased region" description="Low complexity" evidence="2">
    <location>
        <begin position="116"/>
        <end position="131"/>
    </location>
</feature>
<accession>Q847G1</accession>
<protein>
    <recommendedName>
        <fullName evidence="1">Single-stranded DNA-binding protein</fullName>
        <shortName evidence="1">SSB</shortName>
    </recommendedName>
</protein>
<gene>
    <name type="primary">ssb</name>
</gene>
<geneLocation type="plasmid">
    <name>pDTG1</name>
</geneLocation>
<dbReference type="EMBL" id="AF491307">
    <property type="protein sequence ID" value="AAO64313.1"/>
    <property type="molecule type" value="Genomic_DNA"/>
</dbReference>
<dbReference type="RefSeq" id="NP_863114.1">
    <property type="nucleotide sequence ID" value="NC_004999.1"/>
</dbReference>
<dbReference type="RefSeq" id="WP_011117439.1">
    <property type="nucleotide sequence ID" value="NC_004999.1"/>
</dbReference>
<dbReference type="SMR" id="Q847G1"/>
<dbReference type="GO" id="GO:0009295">
    <property type="term" value="C:nucleoid"/>
    <property type="evidence" value="ECO:0007669"/>
    <property type="project" value="TreeGrafter"/>
</dbReference>
<dbReference type="GO" id="GO:0003697">
    <property type="term" value="F:single-stranded DNA binding"/>
    <property type="evidence" value="ECO:0007669"/>
    <property type="project" value="UniProtKB-UniRule"/>
</dbReference>
<dbReference type="GO" id="GO:0006260">
    <property type="term" value="P:DNA replication"/>
    <property type="evidence" value="ECO:0007669"/>
    <property type="project" value="InterPro"/>
</dbReference>
<dbReference type="CDD" id="cd04496">
    <property type="entry name" value="SSB_OBF"/>
    <property type="match status" value="1"/>
</dbReference>
<dbReference type="Gene3D" id="2.40.50.140">
    <property type="entry name" value="Nucleic acid-binding proteins"/>
    <property type="match status" value="1"/>
</dbReference>
<dbReference type="HAMAP" id="MF_00984">
    <property type="entry name" value="SSB"/>
    <property type="match status" value="1"/>
</dbReference>
<dbReference type="InterPro" id="IPR012340">
    <property type="entry name" value="NA-bd_OB-fold"/>
</dbReference>
<dbReference type="InterPro" id="IPR000424">
    <property type="entry name" value="Primosome_PriB/ssb"/>
</dbReference>
<dbReference type="InterPro" id="IPR011344">
    <property type="entry name" value="ssDNA-bd"/>
</dbReference>
<dbReference type="NCBIfam" id="NF004357">
    <property type="entry name" value="PRK05733.1"/>
    <property type="match status" value="1"/>
</dbReference>
<dbReference type="NCBIfam" id="TIGR00621">
    <property type="entry name" value="ssb"/>
    <property type="match status" value="1"/>
</dbReference>
<dbReference type="PANTHER" id="PTHR10302">
    <property type="entry name" value="SINGLE-STRANDED DNA-BINDING PROTEIN"/>
    <property type="match status" value="1"/>
</dbReference>
<dbReference type="PANTHER" id="PTHR10302:SF27">
    <property type="entry name" value="SINGLE-STRANDED DNA-BINDING PROTEIN"/>
    <property type="match status" value="1"/>
</dbReference>
<dbReference type="Pfam" id="PF00436">
    <property type="entry name" value="SSB"/>
    <property type="match status" value="1"/>
</dbReference>
<dbReference type="PIRSF" id="PIRSF002070">
    <property type="entry name" value="SSB"/>
    <property type="match status" value="1"/>
</dbReference>
<dbReference type="SUPFAM" id="SSF50249">
    <property type="entry name" value="Nucleic acid-binding proteins"/>
    <property type="match status" value="1"/>
</dbReference>
<dbReference type="PROSITE" id="PS50935">
    <property type="entry name" value="SSB"/>
    <property type="match status" value="1"/>
</dbReference>
<evidence type="ECO:0000255" key="1">
    <source>
        <dbReference type="HAMAP-Rule" id="MF_00984"/>
    </source>
</evidence>
<evidence type="ECO:0000256" key="2">
    <source>
        <dbReference type="SAM" id="MobiDB-lite"/>
    </source>
</evidence>
<organism>
    <name type="scientific">Pseudomonas putida</name>
    <name type="common">Arthrobacter siderocapsulatus</name>
    <dbReference type="NCBI Taxonomy" id="303"/>
    <lineage>
        <taxon>Bacteria</taxon>
        <taxon>Pseudomonadati</taxon>
        <taxon>Pseudomonadota</taxon>
        <taxon>Gammaproteobacteria</taxon>
        <taxon>Pseudomonadales</taxon>
        <taxon>Pseudomonadaceae</taxon>
        <taxon>Pseudomonas</taxon>
    </lineage>
</organism>
<sequence>MARGVNKVILIGTCGQDPEVRYLPNGNAVTNLSLATSEQWTDKQTGQKVEKTERHRVSLFGKVAEIAGEYLRKGSQVYIEGKLQTREWEKDGIKRYTTEIVVDMQGTMQLLGGRPQNQDGTNQAQQQRRPQQPAPQPQPAYDPMDDDIPFMDPYRFSCLLQ</sequence>
<reference key="1">
    <citation type="submission" date="2002-12" db="EMBL/GenBank/DDBJ databases">
        <title>Complete nucleotide sequence of the NAH plasmid pDTG1 from Pseudomonas putida NCIB 9816-4.</title>
        <authorList>
            <person name="Zylstra G.J."/>
            <person name="Dennis J.J."/>
        </authorList>
    </citation>
    <scope>NUCLEOTIDE SEQUENCE [GENOMIC DNA]</scope>
    <source>
        <strain>NCIMB 9816-4</strain>
    </source>
</reference>
<comment type="subunit">
    <text evidence="1">Homotetramer.</text>
</comment>